<gene>
    <name type="primary">crr</name>
</gene>
<dbReference type="EMBL" id="AF349112">
    <property type="protein sequence ID" value="AAK83253.1"/>
    <property type="molecule type" value="Genomic_DNA"/>
</dbReference>
<dbReference type="RefSeq" id="WP_000473652.1">
    <property type="nucleotide sequence ID" value="NZ_WWFR01000011.1"/>
</dbReference>
<dbReference type="SMR" id="Q93P61"/>
<dbReference type="OMA" id="CDGTIIT"/>
<dbReference type="GO" id="GO:0005737">
    <property type="term" value="C:cytoplasm"/>
    <property type="evidence" value="ECO:0007669"/>
    <property type="project" value="UniProtKB-SubCell"/>
</dbReference>
<dbReference type="GO" id="GO:0016301">
    <property type="term" value="F:kinase activity"/>
    <property type="evidence" value="ECO:0007669"/>
    <property type="project" value="UniProtKB-KW"/>
</dbReference>
<dbReference type="GO" id="GO:0046872">
    <property type="term" value="F:metal ion binding"/>
    <property type="evidence" value="ECO:0007669"/>
    <property type="project" value="UniProtKB-KW"/>
</dbReference>
<dbReference type="GO" id="GO:0009401">
    <property type="term" value="P:phosphoenolpyruvate-dependent sugar phosphotransferase system"/>
    <property type="evidence" value="ECO:0007669"/>
    <property type="project" value="UniProtKB-KW"/>
</dbReference>
<dbReference type="FunFam" id="2.70.70.10:FF:000001">
    <property type="entry name" value="PTS system glucose-specific IIA component"/>
    <property type="match status" value="1"/>
</dbReference>
<dbReference type="Gene3D" id="2.70.70.10">
    <property type="entry name" value="Glucose Permease (Domain IIA)"/>
    <property type="match status" value="1"/>
</dbReference>
<dbReference type="InterPro" id="IPR011055">
    <property type="entry name" value="Dup_hybrid_motif"/>
</dbReference>
<dbReference type="InterPro" id="IPR001127">
    <property type="entry name" value="PTS_EIIA_1_perm"/>
</dbReference>
<dbReference type="InterPro" id="IPR050890">
    <property type="entry name" value="PTS_EIIA_component"/>
</dbReference>
<dbReference type="NCBIfam" id="TIGR00830">
    <property type="entry name" value="PTBA"/>
    <property type="match status" value="1"/>
</dbReference>
<dbReference type="PANTHER" id="PTHR45008">
    <property type="entry name" value="PTS SYSTEM GLUCOSE-SPECIFIC EIIA COMPONENT"/>
    <property type="match status" value="1"/>
</dbReference>
<dbReference type="PANTHER" id="PTHR45008:SF1">
    <property type="entry name" value="PTS SYSTEM GLUCOSE-SPECIFIC EIIA COMPONENT"/>
    <property type="match status" value="1"/>
</dbReference>
<dbReference type="Pfam" id="PF00358">
    <property type="entry name" value="PTS_EIIA_1"/>
    <property type="match status" value="1"/>
</dbReference>
<dbReference type="SUPFAM" id="SSF51261">
    <property type="entry name" value="Duplicated hybrid motif"/>
    <property type="match status" value="1"/>
</dbReference>
<dbReference type="PROSITE" id="PS51093">
    <property type="entry name" value="PTS_EIIA_TYPE_1"/>
    <property type="match status" value="1"/>
</dbReference>
<dbReference type="PROSITE" id="PS00371">
    <property type="entry name" value="PTS_EIIA_TYPE_1_HIS"/>
    <property type="match status" value="1"/>
</dbReference>
<reference key="1">
    <citation type="submission" date="2001-02" db="EMBL/GenBank/DDBJ databases">
        <title>Identification of a putative methionine sulfoxide reductase locus in Staphylococcus aureus.</title>
        <authorList>
            <person name="Singh V.K."/>
            <person name="Wilkinson B.J."/>
            <person name="Jayaswal R.K."/>
        </authorList>
    </citation>
    <scope>NUCLEOTIDE SEQUENCE [GENOMIC DNA]</scope>
</reference>
<feature type="chain" id="PRO_0000186552" description="PTS system glucose-specific EIIA component">
    <location>
        <begin position="1"/>
        <end position="166"/>
    </location>
</feature>
<feature type="domain" description="PTS EIIA type-1" evidence="2">
    <location>
        <begin position="34"/>
        <end position="138"/>
    </location>
</feature>
<feature type="active site" description="Tele-phosphohistidine intermediate; for EIIA activity" evidence="1 2">
    <location>
        <position position="86"/>
    </location>
</feature>
<feature type="binding site" evidence="1">
    <location>
        <position position="71"/>
    </location>
    <ligand>
        <name>Zn(2+)</name>
        <dbReference type="ChEBI" id="CHEBI:29105"/>
        <note>ligand shared with glycerol kinase</note>
    </ligand>
</feature>
<feature type="binding site" evidence="1">
    <location>
        <position position="86"/>
    </location>
    <ligand>
        <name>Zn(2+)</name>
        <dbReference type="ChEBI" id="CHEBI:29105"/>
        <note>ligand shared with glycerol kinase</note>
    </ligand>
</feature>
<feature type="site" description="Important for phospho-donor activity" evidence="1">
    <location>
        <position position="71"/>
    </location>
</feature>
<feature type="modified residue" description="Phosphohistidine; by HPr" evidence="1">
    <location>
        <position position="86"/>
    </location>
</feature>
<organism>
    <name type="scientific">Staphylococcus aureus</name>
    <dbReference type="NCBI Taxonomy" id="1280"/>
    <lineage>
        <taxon>Bacteria</taxon>
        <taxon>Bacillati</taxon>
        <taxon>Bacillota</taxon>
        <taxon>Bacilli</taxon>
        <taxon>Bacillales</taxon>
        <taxon>Staphylococcaceae</taxon>
        <taxon>Staphylococcus</taxon>
    </lineage>
</organism>
<evidence type="ECO:0000250" key="1">
    <source>
        <dbReference type="UniProtKB" id="P69783"/>
    </source>
</evidence>
<evidence type="ECO:0000255" key="2">
    <source>
        <dbReference type="PROSITE-ProRule" id="PRU00416"/>
    </source>
</evidence>
<evidence type="ECO:0000305" key="3"/>
<proteinExistence type="inferred from homology"/>
<comment type="function">
    <text evidence="1">The phosphoenolpyruvate-dependent sugar phosphotransferase system (sugar PTS), a major carbohydrate active transport system, catalyzes the phosphorylation of incoming sugar substrates concomitantly with their translocation across the cell membrane. The enzyme II complex composed of PtsG and Crr is involved in glucose transport.</text>
</comment>
<comment type="cofactor">
    <cofactor evidence="1">
        <name>Zn(2+)</name>
        <dbReference type="ChEBI" id="CHEBI:29105"/>
    </cofactor>
    <text evidence="1">Binds 1 zinc ion per glycerol kinase EIIA-Glc dimer. The zinc ion is important for dimerization.</text>
</comment>
<comment type="subunit">
    <text evidence="1">Heterodimer with glycerol kinase (glpk).</text>
</comment>
<comment type="subcellular location">
    <subcellularLocation>
        <location evidence="3">Cytoplasm</location>
    </subcellularLocation>
</comment>
<comment type="domain">
    <text evidence="2">The EIIA domain is phosphorylated by phospho-HPr on a histidyl residue. Then, it transfers the phosphoryl group to the EIIB domain.</text>
</comment>
<protein>
    <recommendedName>
        <fullName evidence="1">PTS system glucose-specific EIIA component</fullName>
    </recommendedName>
    <alternativeName>
        <fullName evidence="1">EIIA-Glc</fullName>
    </alternativeName>
    <alternativeName>
        <fullName evidence="1">EIII-Glc</fullName>
    </alternativeName>
    <alternativeName>
        <fullName evidence="1">Glucose-specific phosphotransferase enzyme IIA component</fullName>
    </alternativeName>
</protein>
<keyword id="KW-0963">Cytoplasm</keyword>
<keyword id="KW-0418">Kinase</keyword>
<keyword id="KW-0479">Metal-binding</keyword>
<keyword id="KW-0597">Phosphoprotein</keyword>
<keyword id="KW-0598">Phosphotransferase system</keyword>
<keyword id="KW-0762">Sugar transport</keyword>
<keyword id="KW-0808">Transferase</keyword>
<keyword id="KW-0813">Transport</keyword>
<keyword id="KW-0862">Zinc</keyword>
<accession>Q93P61</accession>
<sequence length="166" mass="17961">MFKKLFGKGKEVQKDIAIYAPLTGEFVKIEDIPDPVFAQKMMGEGFGINPTEGEVVSPIAGRVDNVFPTKHAIGLKADNGLELLVHIGLDTVQLDGEGFEVLVSSGDEVNVGDPLVRFNLEYINNNAKSVISPIIITNTDQAASINIYDENAVIKGETKVIDVTMN</sequence>
<name>PTGA_STAAU</name>